<sequence length="262" mass="28699">MSRSNQEALADFVADAPPGELNQVVEAISTVVDGNSSILSKLETDVHNKILDQCMVVSLGKSKSLVSKYNQLSKDTFYDSQSGQKFEFDFDTKKATPSGSHGSDSPIQGALDKYFSAHFPSEGAAGVFPQDDGSIALVLVDGKYNPANYWNGKWRSVYIFESGSLSGTIDVDVHYYEDGNVRLKSSEKVDLGSVSESDIVDAISKAEQQFQEKLNKSFNGLNEDSFKALRRQLPVTRSKINWGKSISNYRLGKDINVGGGRE</sequence>
<evidence type="ECO:0000250" key="1"/>
<evidence type="ECO:0000305" key="2"/>
<name>CAPZA_YARLI</name>
<gene>
    <name type="primary">CAP1</name>
    <name type="ordered locus">YALI0E05291g</name>
</gene>
<feature type="chain" id="PRO_0000255620" description="F-actin-capping protein subunit alpha">
    <location>
        <begin position="1"/>
        <end position="262"/>
    </location>
</feature>
<comment type="function">
    <text evidence="1">F-actin-capping proteins bind in a Ca(2+)-independent manner to the fast growing ends of actin filaments (barbed end) thereby blocking the exchange of subunits at these ends. Unlike other capping proteins (such as gelsolin and severin), these proteins do not sever actin filaments (By similarity).</text>
</comment>
<comment type="subunit">
    <text evidence="1">Heterodimer of an alpha and a beta subunit.</text>
</comment>
<comment type="subcellular location">
    <subcellularLocation>
        <location evidence="1">Cytoplasm</location>
        <location evidence="1">Cytoskeleton</location>
    </subcellularLocation>
    <text evidence="1">Septum.</text>
</comment>
<comment type="similarity">
    <text evidence="2">Belongs to the F-actin-capping protein alpha subunit family.</text>
</comment>
<accession>Q6C6Y4</accession>
<reference key="1">
    <citation type="journal article" date="2004" name="Nature">
        <title>Genome evolution in yeasts.</title>
        <authorList>
            <person name="Dujon B."/>
            <person name="Sherman D."/>
            <person name="Fischer G."/>
            <person name="Durrens P."/>
            <person name="Casaregola S."/>
            <person name="Lafontaine I."/>
            <person name="de Montigny J."/>
            <person name="Marck C."/>
            <person name="Neuveglise C."/>
            <person name="Talla E."/>
            <person name="Goffard N."/>
            <person name="Frangeul L."/>
            <person name="Aigle M."/>
            <person name="Anthouard V."/>
            <person name="Babour A."/>
            <person name="Barbe V."/>
            <person name="Barnay S."/>
            <person name="Blanchin S."/>
            <person name="Beckerich J.-M."/>
            <person name="Beyne E."/>
            <person name="Bleykasten C."/>
            <person name="Boisrame A."/>
            <person name="Boyer J."/>
            <person name="Cattolico L."/>
            <person name="Confanioleri F."/>
            <person name="de Daruvar A."/>
            <person name="Despons L."/>
            <person name="Fabre E."/>
            <person name="Fairhead C."/>
            <person name="Ferry-Dumazet H."/>
            <person name="Groppi A."/>
            <person name="Hantraye F."/>
            <person name="Hennequin C."/>
            <person name="Jauniaux N."/>
            <person name="Joyet P."/>
            <person name="Kachouri R."/>
            <person name="Kerrest A."/>
            <person name="Koszul R."/>
            <person name="Lemaire M."/>
            <person name="Lesur I."/>
            <person name="Ma L."/>
            <person name="Muller H."/>
            <person name="Nicaud J.-M."/>
            <person name="Nikolski M."/>
            <person name="Oztas S."/>
            <person name="Ozier-Kalogeropoulos O."/>
            <person name="Pellenz S."/>
            <person name="Potier S."/>
            <person name="Richard G.-F."/>
            <person name="Straub M.-L."/>
            <person name="Suleau A."/>
            <person name="Swennen D."/>
            <person name="Tekaia F."/>
            <person name="Wesolowski-Louvel M."/>
            <person name="Westhof E."/>
            <person name="Wirth B."/>
            <person name="Zeniou-Meyer M."/>
            <person name="Zivanovic Y."/>
            <person name="Bolotin-Fukuhara M."/>
            <person name="Thierry A."/>
            <person name="Bouchier C."/>
            <person name="Caudron B."/>
            <person name="Scarpelli C."/>
            <person name="Gaillardin C."/>
            <person name="Weissenbach J."/>
            <person name="Wincker P."/>
            <person name="Souciet J.-L."/>
        </authorList>
    </citation>
    <scope>NUCLEOTIDE SEQUENCE [LARGE SCALE GENOMIC DNA]</scope>
    <source>
        <strain>CLIB 122 / E 150</strain>
    </source>
</reference>
<proteinExistence type="inferred from homology"/>
<protein>
    <recommendedName>
        <fullName>F-actin-capping protein subunit alpha</fullName>
    </recommendedName>
</protein>
<dbReference type="EMBL" id="CR382131">
    <property type="protein sequence ID" value="CAG79159.2"/>
    <property type="molecule type" value="Genomic_DNA"/>
</dbReference>
<dbReference type="RefSeq" id="XP_503578.2">
    <property type="nucleotide sequence ID" value="XM_503578.2"/>
</dbReference>
<dbReference type="SMR" id="Q6C6Y4"/>
<dbReference type="FunCoup" id="Q6C6Y4">
    <property type="interactions" value="845"/>
</dbReference>
<dbReference type="STRING" id="284591.Q6C6Y4"/>
<dbReference type="EnsemblFungi" id="CAG79159">
    <property type="protein sequence ID" value="CAG79159"/>
    <property type="gene ID" value="YALI0_E05291g"/>
</dbReference>
<dbReference type="KEGG" id="yli:2912288"/>
<dbReference type="VEuPathDB" id="FungiDB:YALI0_E05291g"/>
<dbReference type="HOGENOM" id="CLU_045161_3_0_1"/>
<dbReference type="InParanoid" id="Q6C6Y4"/>
<dbReference type="OMA" id="QEHFPNA"/>
<dbReference type="OrthoDB" id="14687at4891"/>
<dbReference type="Proteomes" id="UP000001300">
    <property type="component" value="Chromosome E"/>
</dbReference>
<dbReference type="GO" id="GO:0030479">
    <property type="term" value="C:actin cortical patch"/>
    <property type="evidence" value="ECO:0000318"/>
    <property type="project" value="GO_Central"/>
</dbReference>
<dbReference type="GO" id="GO:0005934">
    <property type="term" value="C:cellular bud tip"/>
    <property type="evidence" value="ECO:0007669"/>
    <property type="project" value="EnsemblFungi"/>
</dbReference>
<dbReference type="GO" id="GO:0030863">
    <property type="term" value="C:cortical cytoskeleton"/>
    <property type="evidence" value="ECO:0000318"/>
    <property type="project" value="GO_Central"/>
</dbReference>
<dbReference type="GO" id="GO:0008290">
    <property type="term" value="C:F-actin capping protein complex"/>
    <property type="evidence" value="ECO:0000318"/>
    <property type="project" value="GO_Central"/>
</dbReference>
<dbReference type="GO" id="GO:0000131">
    <property type="term" value="C:incipient cellular bud site"/>
    <property type="evidence" value="ECO:0007669"/>
    <property type="project" value="EnsemblFungi"/>
</dbReference>
<dbReference type="GO" id="GO:0110085">
    <property type="term" value="C:mitotic actomyosin contractile ring"/>
    <property type="evidence" value="ECO:0007669"/>
    <property type="project" value="EnsemblFungi"/>
</dbReference>
<dbReference type="GO" id="GO:0051015">
    <property type="term" value="F:actin filament binding"/>
    <property type="evidence" value="ECO:0000318"/>
    <property type="project" value="GO_Central"/>
</dbReference>
<dbReference type="GO" id="GO:0030036">
    <property type="term" value="P:actin cytoskeleton organization"/>
    <property type="evidence" value="ECO:0000318"/>
    <property type="project" value="GO_Central"/>
</dbReference>
<dbReference type="GO" id="GO:0051016">
    <property type="term" value="P:barbed-end actin filament capping"/>
    <property type="evidence" value="ECO:0000318"/>
    <property type="project" value="GO_Central"/>
</dbReference>
<dbReference type="FunFam" id="3.90.1150.210:FF:000003">
    <property type="entry name" value="F-actin-capping protein subunit alpha"/>
    <property type="match status" value="1"/>
</dbReference>
<dbReference type="Gene3D" id="3.30.1140.60">
    <property type="entry name" value="F-actin capping protein, alpha subunit"/>
    <property type="match status" value="1"/>
</dbReference>
<dbReference type="Gene3D" id="3.90.1150.210">
    <property type="entry name" value="F-actin capping protein, beta subunit"/>
    <property type="match status" value="1"/>
</dbReference>
<dbReference type="InterPro" id="IPR002189">
    <property type="entry name" value="CapZ_alpha"/>
</dbReference>
<dbReference type="InterPro" id="IPR037282">
    <property type="entry name" value="CapZ_alpha/beta"/>
</dbReference>
<dbReference type="InterPro" id="IPR042276">
    <property type="entry name" value="CapZ_alpha/beta_2"/>
</dbReference>
<dbReference type="InterPro" id="IPR042489">
    <property type="entry name" value="CapZ_alpha_1"/>
</dbReference>
<dbReference type="InterPro" id="IPR017865">
    <property type="entry name" value="F-actin_cap_asu_CS"/>
</dbReference>
<dbReference type="PANTHER" id="PTHR10653">
    <property type="entry name" value="F-ACTIN-CAPPING PROTEIN SUBUNIT ALPHA"/>
    <property type="match status" value="1"/>
</dbReference>
<dbReference type="PANTHER" id="PTHR10653:SF0">
    <property type="entry name" value="F-ACTIN-CAPPING PROTEIN SUBUNIT ALPHA"/>
    <property type="match status" value="1"/>
</dbReference>
<dbReference type="Pfam" id="PF01267">
    <property type="entry name" value="F-actin_cap_A"/>
    <property type="match status" value="1"/>
</dbReference>
<dbReference type="PRINTS" id="PR00191">
    <property type="entry name" value="FACTINCAPA"/>
</dbReference>
<dbReference type="SUPFAM" id="SSF90096">
    <property type="entry name" value="Subunits of heterodimeric actin filament capping protein Capz"/>
    <property type="match status" value="1"/>
</dbReference>
<dbReference type="PROSITE" id="PS00748">
    <property type="entry name" value="F_ACTIN_CAPPING_A_1"/>
    <property type="match status" value="1"/>
</dbReference>
<dbReference type="PROSITE" id="PS00749">
    <property type="entry name" value="F_ACTIN_CAPPING_A_2"/>
    <property type="match status" value="1"/>
</dbReference>
<keyword id="KW-0117">Actin capping</keyword>
<keyword id="KW-0009">Actin-binding</keyword>
<keyword id="KW-0963">Cytoplasm</keyword>
<keyword id="KW-0206">Cytoskeleton</keyword>
<keyword id="KW-1185">Reference proteome</keyword>
<organism>
    <name type="scientific">Yarrowia lipolytica (strain CLIB 122 / E 150)</name>
    <name type="common">Yeast</name>
    <name type="synonym">Candida lipolytica</name>
    <dbReference type="NCBI Taxonomy" id="284591"/>
    <lineage>
        <taxon>Eukaryota</taxon>
        <taxon>Fungi</taxon>
        <taxon>Dikarya</taxon>
        <taxon>Ascomycota</taxon>
        <taxon>Saccharomycotina</taxon>
        <taxon>Dipodascomycetes</taxon>
        <taxon>Dipodascales</taxon>
        <taxon>Dipodascales incertae sedis</taxon>
        <taxon>Yarrowia</taxon>
    </lineage>
</organism>